<organism>
    <name type="scientific">Bradyrhizobium diazoefficiens (strain JCM 10833 / BCRC 13528 / IAM 13628 / NBRC 14792 / USDA 110)</name>
    <dbReference type="NCBI Taxonomy" id="224911"/>
    <lineage>
        <taxon>Bacteria</taxon>
        <taxon>Pseudomonadati</taxon>
        <taxon>Pseudomonadota</taxon>
        <taxon>Alphaproteobacteria</taxon>
        <taxon>Hyphomicrobiales</taxon>
        <taxon>Nitrobacteraceae</taxon>
        <taxon>Bradyrhizobium</taxon>
    </lineage>
</organism>
<sequence>MTKTPAKKKRARSSKAKGTDANAALEARIGHSFADPNLLMQGITHVSALKSGRKRGDSYQRLEFLGDHVLGLVVSDMLYHAFPNADEGELSKRLAELVRKESCADVAKSLGLLDDIKLGSVGPSADARLRKSVLGDICEAVIGAIFLDGGHAAAAEFVKRNWTERMHKPRRPLRDPKTVLQEWAQGKGLPTPVYREVERTGPHHDPQFRVAVDLPGLAPAEGIGGSKRAAEKVAASVMIEREGVGGGNDG</sequence>
<name>RNC_BRADU</name>
<proteinExistence type="inferred from homology"/>
<gene>
    <name evidence="1" type="primary">rnc</name>
    <name type="ordered locus">bll5061</name>
</gene>
<comment type="function">
    <text evidence="1">Digests double-stranded RNA. Involved in the processing of primary rRNA transcript to yield the immediate precursors to the large and small rRNAs (23S and 16S). Processes some mRNAs, and tRNAs when they are encoded in the rRNA operon. Processes pre-crRNA and tracrRNA of type II CRISPR loci if present in the organism.</text>
</comment>
<comment type="catalytic activity">
    <reaction evidence="1">
        <text>Endonucleolytic cleavage to 5'-phosphomonoester.</text>
        <dbReference type="EC" id="3.1.26.3"/>
    </reaction>
</comment>
<comment type="cofactor">
    <cofactor evidence="1">
        <name>Mg(2+)</name>
        <dbReference type="ChEBI" id="CHEBI:18420"/>
    </cofactor>
</comment>
<comment type="subunit">
    <text evidence="1">Homodimer.</text>
</comment>
<comment type="subcellular location">
    <subcellularLocation>
        <location evidence="1">Cytoplasm</location>
    </subcellularLocation>
</comment>
<comment type="similarity">
    <text evidence="1">Belongs to the ribonuclease III family.</text>
</comment>
<comment type="sequence caution" evidence="3">
    <conflict type="erroneous initiation">
        <sequence resource="EMBL-CDS" id="BAC50326"/>
    </conflict>
    <text>Extended N-terminus.</text>
</comment>
<evidence type="ECO:0000255" key="1">
    <source>
        <dbReference type="HAMAP-Rule" id="MF_00104"/>
    </source>
</evidence>
<evidence type="ECO:0000256" key="2">
    <source>
        <dbReference type="SAM" id="MobiDB-lite"/>
    </source>
</evidence>
<evidence type="ECO:0000305" key="3"/>
<reference key="1">
    <citation type="submission" date="1998-05" db="EMBL/GenBank/DDBJ databases">
        <title>sipF, the second functional type I signal peptidase of Bradyrhizobium japonicum, is encoded in the vicinity of essential genes involved in RNA processing and cell division.</title>
        <authorList>
            <person name="Bairl A."/>
            <person name="Mueller P."/>
        </authorList>
    </citation>
    <scope>NUCLEOTIDE SEQUENCE [GENOMIC DNA]</scope>
    <source>
        <strain>USDA 110spc4</strain>
    </source>
</reference>
<reference key="2">
    <citation type="journal article" date="2002" name="DNA Res.">
        <title>Complete genomic sequence of nitrogen-fixing symbiotic bacterium Bradyrhizobium japonicum USDA110.</title>
        <authorList>
            <person name="Kaneko T."/>
            <person name="Nakamura Y."/>
            <person name="Sato S."/>
            <person name="Minamisawa K."/>
            <person name="Uchiumi T."/>
            <person name="Sasamoto S."/>
            <person name="Watanabe A."/>
            <person name="Idesawa K."/>
            <person name="Iriguchi M."/>
            <person name="Kawashima K."/>
            <person name="Kohara M."/>
            <person name="Matsumoto M."/>
            <person name="Shimpo S."/>
            <person name="Tsuruoka H."/>
            <person name="Wada T."/>
            <person name="Yamada M."/>
            <person name="Tabata S."/>
        </authorList>
    </citation>
    <scope>NUCLEOTIDE SEQUENCE [LARGE SCALE GENOMIC DNA]</scope>
    <source>
        <strain>JCM 10833 / BCRC 13528 / IAM 13628 / NBRC 14792 / USDA 110</strain>
    </source>
</reference>
<feature type="chain" id="PRO_0000180377" description="Ribonuclease 3">
    <location>
        <begin position="1"/>
        <end position="250"/>
    </location>
</feature>
<feature type="domain" description="RNase III" evidence="1">
    <location>
        <begin position="22"/>
        <end position="150"/>
    </location>
</feature>
<feature type="domain" description="DRBM" evidence="1">
    <location>
        <begin position="175"/>
        <end position="244"/>
    </location>
</feature>
<feature type="region of interest" description="Disordered" evidence="2">
    <location>
        <begin position="1"/>
        <end position="21"/>
    </location>
</feature>
<feature type="compositionally biased region" description="Basic residues" evidence="2">
    <location>
        <begin position="1"/>
        <end position="15"/>
    </location>
</feature>
<feature type="active site" evidence="1">
    <location>
        <position position="67"/>
    </location>
</feature>
<feature type="active site" evidence="1">
    <location>
        <position position="139"/>
    </location>
</feature>
<feature type="binding site" evidence="1">
    <location>
        <position position="63"/>
    </location>
    <ligand>
        <name>Mg(2+)</name>
        <dbReference type="ChEBI" id="CHEBI:18420"/>
    </ligand>
</feature>
<feature type="binding site" evidence="1">
    <location>
        <position position="136"/>
    </location>
    <ligand>
        <name>Mg(2+)</name>
        <dbReference type="ChEBI" id="CHEBI:18420"/>
    </ligand>
</feature>
<feature type="binding site" evidence="1">
    <location>
        <position position="139"/>
    </location>
    <ligand>
        <name>Mg(2+)</name>
        <dbReference type="ChEBI" id="CHEBI:18420"/>
    </ligand>
</feature>
<feature type="sequence conflict" description="In Ref. 1; AAD02939." evidence="3" ref="1">
    <original>MTKTPAKKKRARSSKAKGTDANAALEARIGHS</original>
    <variation>MRTRRLRRASGHT</variation>
    <location>
        <begin position="1"/>
        <end position="32"/>
    </location>
</feature>
<protein>
    <recommendedName>
        <fullName evidence="1">Ribonuclease 3</fullName>
        <ecNumber evidence="1">3.1.26.3</ecNumber>
    </recommendedName>
    <alternativeName>
        <fullName evidence="1">Ribonuclease III</fullName>
        <shortName evidence="1">RNase III</shortName>
    </alternativeName>
</protein>
<accession>O69161</accession>
<keyword id="KW-0963">Cytoplasm</keyword>
<keyword id="KW-0255">Endonuclease</keyword>
<keyword id="KW-0378">Hydrolase</keyword>
<keyword id="KW-0460">Magnesium</keyword>
<keyword id="KW-0479">Metal-binding</keyword>
<keyword id="KW-0507">mRNA processing</keyword>
<keyword id="KW-0540">Nuclease</keyword>
<keyword id="KW-1185">Reference proteome</keyword>
<keyword id="KW-0694">RNA-binding</keyword>
<keyword id="KW-0698">rRNA processing</keyword>
<keyword id="KW-0699">rRNA-binding</keyword>
<keyword id="KW-0819">tRNA processing</keyword>
<dbReference type="EC" id="3.1.26.3" evidence="1"/>
<dbReference type="EMBL" id="AF065159">
    <property type="protein sequence ID" value="AAD02939.1"/>
    <property type="molecule type" value="Genomic_DNA"/>
</dbReference>
<dbReference type="EMBL" id="BA000040">
    <property type="protein sequence ID" value="BAC50326.1"/>
    <property type="status" value="ALT_INIT"/>
    <property type="molecule type" value="Genomic_DNA"/>
</dbReference>
<dbReference type="RefSeq" id="NP_771701.1">
    <property type="nucleotide sequence ID" value="NC_004463.1"/>
</dbReference>
<dbReference type="RefSeq" id="WP_011087822.1">
    <property type="nucleotide sequence ID" value="NZ_CP011360.1"/>
</dbReference>
<dbReference type="SMR" id="O69161"/>
<dbReference type="FunCoup" id="O69161">
    <property type="interactions" value="543"/>
</dbReference>
<dbReference type="STRING" id="224911.AAV28_22675"/>
<dbReference type="EnsemblBacteria" id="BAC50326">
    <property type="protein sequence ID" value="BAC50326"/>
    <property type="gene ID" value="BAC50326"/>
</dbReference>
<dbReference type="GeneID" id="46492068"/>
<dbReference type="KEGG" id="bja:bll5061"/>
<dbReference type="PATRIC" id="fig|224911.5.peg.5141"/>
<dbReference type="eggNOG" id="COG0571">
    <property type="taxonomic scope" value="Bacteria"/>
</dbReference>
<dbReference type="HOGENOM" id="CLU_000907_1_1_5"/>
<dbReference type="InParanoid" id="O69161"/>
<dbReference type="OrthoDB" id="9805026at2"/>
<dbReference type="Proteomes" id="UP000002526">
    <property type="component" value="Chromosome"/>
</dbReference>
<dbReference type="GO" id="GO:0005829">
    <property type="term" value="C:cytosol"/>
    <property type="evidence" value="ECO:0000318"/>
    <property type="project" value="GO_Central"/>
</dbReference>
<dbReference type="GO" id="GO:0003725">
    <property type="term" value="F:double-stranded RNA binding"/>
    <property type="evidence" value="ECO:0000318"/>
    <property type="project" value="GO_Central"/>
</dbReference>
<dbReference type="GO" id="GO:0046872">
    <property type="term" value="F:metal ion binding"/>
    <property type="evidence" value="ECO:0007669"/>
    <property type="project" value="UniProtKB-KW"/>
</dbReference>
<dbReference type="GO" id="GO:0004525">
    <property type="term" value="F:ribonuclease III activity"/>
    <property type="evidence" value="ECO:0000318"/>
    <property type="project" value="GO_Central"/>
</dbReference>
<dbReference type="GO" id="GO:0019843">
    <property type="term" value="F:rRNA binding"/>
    <property type="evidence" value="ECO:0007669"/>
    <property type="project" value="UniProtKB-KW"/>
</dbReference>
<dbReference type="GO" id="GO:0006397">
    <property type="term" value="P:mRNA processing"/>
    <property type="evidence" value="ECO:0007669"/>
    <property type="project" value="UniProtKB-UniRule"/>
</dbReference>
<dbReference type="GO" id="GO:0010468">
    <property type="term" value="P:regulation of gene expression"/>
    <property type="evidence" value="ECO:0000318"/>
    <property type="project" value="GO_Central"/>
</dbReference>
<dbReference type="GO" id="GO:0006396">
    <property type="term" value="P:RNA processing"/>
    <property type="evidence" value="ECO:0000318"/>
    <property type="project" value="GO_Central"/>
</dbReference>
<dbReference type="GO" id="GO:0006364">
    <property type="term" value="P:rRNA processing"/>
    <property type="evidence" value="ECO:0007669"/>
    <property type="project" value="UniProtKB-UniRule"/>
</dbReference>
<dbReference type="GO" id="GO:0008033">
    <property type="term" value="P:tRNA processing"/>
    <property type="evidence" value="ECO:0007669"/>
    <property type="project" value="UniProtKB-KW"/>
</dbReference>
<dbReference type="CDD" id="cd10845">
    <property type="entry name" value="DSRM_RNAse_III_family"/>
    <property type="match status" value="1"/>
</dbReference>
<dbReference type="CDD" id="cd00593">
    <property type="entry name" value="RIBOc"/>
    <property type="match status" value="1"/>
</dbReference>
<dbReference type="FunFam" id="1.10.1520.10:FF:000001">
    <property type="entry name" value="Ribonuclease 3"/>
    <property type="match status" value="1"/>
</dbReference>
<dbReference type="FunFam" id="3.30.160.20:FF:000003">
    <property type="entry name" value="Ribonuclease 3"/>
    <property type="match status" value="1"/>
</dbReference>
<dbReference type="Gene3D" id="3.30.160.20">
    <property type="match status" value="1"/>
</dbReference>
<dbReference type="Gene3D" id="1.10.1520.10">
    <property type="entry name" value="Ribonuclease III domain"/>
    <property type="match status" value="1"/>
</dbReference>
<dbReference type="HAMAP" id="MF_00104">
    <property type="entry name" value="RNase_III"/>
    <property type="match status" value="1"/>
</dbReference>
<dbReference type="InterPro" id="IPR014720">
    <property type="entry name" value="dsRBD_dom"/>
</dbReference>
<dbReference type="InterPro" id="IPR011907">
    <property type="entry name" value="RNase_III"/>
</dbReference>
<dbReference type="InterPro" id="IPR000999">
    <property type="entry name" value="RNase_III_dom"/>
</dbReference>
<dbReference type="InterPro" id="IPR036389">
    <property type="entry name" value="RNase_III_sf"/>
</dbReference>
<dbReference type="NCBIfam" id="TIGR02191">
    <property type="entry name" value="RNaseIII"/>
    <property type="match status" value="1"/>
</dbReference>
<dbReference type="PANTHER" id="PTHR11207:SF0">
    <property type="entry name" value="RIBONUCLEASE 3"/>
    <property type="match status" value="1"/>
</dbReference>
<dbReference type="PANTHER" id="PTHR11207">
    <property type="entry name" value="RIBONUCLEASE III"/>
    <property type="match status" value="1"/>
</dbReference>
<dbReference type="Pfam" id="PF00035">
    <property type="entry name" value="dsrm"/>
    <property type="match status" value="1"/>
</dbReference>
<dbReference type="Pfam" id="PF14622">
    <property type="entry name" value="Ribonucleas_3_3"/>
    <property type="match status" value="1"/>
</dbReference>
<dbReference type="SMART" id="SM00358">
    <property type="entry name" value="DSRM"/>
    <property type="match status" value="1"/>
</dbReference>
<dbReference type="SMART" id="SM00535">
    <property type="entry name" value="RIBOc"/>
    <property type="match status" value="1"/>
</dbReference>
<dbReference type="SUPFAM" id="SSF54768">
    <property type="entry name" value="dsRNA-binding domain-like"/>
    <property type="match status" value="1"/>
</dbReference>
<dbReference type="SUPFAM" id="SSF69065">
    <property type="entry name" value="RNase III domain-like"/>
    <property type="match status" value="1"/>
</dbReference>
<dbReference type="PROSITE" id="PS50137">
    <property type="entry name" value="DS_RBD"/>
    <property type="match status" value="1"/>
</dbReference>
<dbReference type="PROSITE" id="PS00517">
    <property type="entry name" value="RNASE_3_1"/>
    <property type="match status" value="1"/>
</dbReference>
<dbReference type="PROSITE" id="PS50142">
    <property type="entry name" value="RNASE_3_2"/>
    <property type="match status" value="1"/>
</dbReference>